<accession>P59163</accession>
<reference key="1">
    <citation type="journal article" date="2003" name="Genome Res.">
        <title>Comparative complete genome sequence analysis of the amino acid replacements responsible for the thermostability of Corynebacterium efficiens.</title>
        <authorList>
            <person name="Nishio Y."/>
            <person name="Nakamura Y."/>
            <person name="Kawarabayasi Y."/>
            <person name="Usuda Y."/>
            <person name="Kimura E."/>
            <person name="Sugimoto S."/>
            <person name="Matsui K."/>
            <person name="Yamagishi A."/>
            <person name="Kikuchi H."/>
            <person name="Ikeo K."/>
            <person name="Gojobori T."/>
        </authorList>
    </citation>
    <scope>NUCLEOTIDE SEQUENCE [LARGE SCALE GENOMIC DNA]</scope>
    <source>
        <strain>DSM 44549 / YS-314 / AJ 12310 / JCM 11189 / NBRC 100395</strain>
    </source>
</reference>
<name>RS12_COREF</name>
<organism>
    <name type="scientific">Corynebacterium efficiens (strain DSM 44549 / YS-314 / AJ 12310 / JCM 11189 / NBRC 100395)</name>
    <dbReference type="NCBI Taxonomy" id="196164"/>
    <lineage>
        <taxon>Bacteria</taxon>
        <taxon>Bacillati</taxon>
        <taxon>Actinomycetota</taxon>
        <taxon>Actinomycetes</taxon>
        <taxon>Mycobacteriales</taxon>
        <taxon>Corynebacteriaceae</taxon>
        <taxon>Corynebacterium</taxon>
    </lineage>
</organism>
<gene>
    <name evidence="1" type="primary">rpsL</name>
    <name type="ordered locus">CE0514</name>
</gene>
<keyword id="KW-1185">Reference proteome</keyword>
<keyword id="KW-0687">Ribonucleoprotein</keyword>
<keyword id="KW-0689">Ribosomal protein</keyword>
<keyword id="KW-0694">RNA-binding</keyword>
<keyword id="KW-0699">rRNA-binding</keyword>
<keyword id="KW-0820">tRNA-binding</keyword>
<comment type="function">
    <text evidence="1">With S4 and S5 plays an important role in translational accuracy.</text>
</comment>
<comment type="function">
    <text evidence="1">Interacts with and stabilizes bases of the 16S rRNA that are involved in tRNA selection in the A site and with the mRNA backbone. Located at the interface of the 30S and 50S subunits, it traverses the body of the 30S subunit contacting proteins on the other side and probably holding the rRNA structure together. The combined cluster of proteins S8, S12 and S17 appears to hold together the shoulder and platform of the 30S subunit.</text>
</comment>
<comment type="subunit">
    <text evidence="1">Part of the 30S ribosomal subunit. Contacts proteins S8 and S17. May interact with IF1 in the 30S initiation complex.</text>
</comment>
<comment type="similarity">
    <text evidence="1">Belongs to the universal ribosomal protein uS12 family.</text>
</comment>
<comment type="caution">
    <text evidence="2">Because the enzyme that would modify Asp-89 to 3-methylthioaspartic acid has not been found in the proteome of this organism, that modification is not predicted.</text>
</comment>
<evidence type="ECO:0000255" key="1">
    <source>
        <dbReference type="HAMAP-Rule" id="MF_00403"/>
    </source>
</evidence>
<evidence type="ECO:0000305" key="2"/>
<dbReference type="EMBL" id="BA000035">
    <property type="protein sequence ID" value="BAC17324.1"/>
    <property type="molecule type" value="Genomic_DNA"/>
</dbReference>
<dbReference type="RefSeq" id="WP_006769815.1">
    <property type="nucleotide sequence ID" value="NC_004369.1"/>
</dbReference>
<dbReference type="SMR" id="P59163"/>
<dbReference type="STRING" id="196164.gene:10740916"/>
<dbReference type="KEGG" id="cef:CE0514"/>
<dbReference type="eggNOG" id="COG0048">
    <property type="taxonomic scope" value="Bacteria"/>
</dbReference>
<dbReference type="HOGENOM" id="CLU_104295_1_2_11"/>
<dbReference type="OrthoDB" id="9802366at2"/>
<dbReference type="Proteomes" id="UP000001409">
    <property type="component" value="Chromosome"/>
</dbReference>
<dbReference type="GO" id="GO:0015935">
    <property type="term" value="C:small ribosomal subunit"/>
    <property type="evidence" value="ECO:0007669"/>
    <property type="project" value="InterPro"/>
</dbReference>
<dbReference type="GO" id="GO:0019843">
    <property type="term" value="F:rRNA binding"/>
    <property type="evidence" value="ECO:0007669"/>
    <property type="project" value="UniProtKB-UniRule"/>
</dbReference>
<dbReference type="GO" id="GO:0003735">
    <property type="term" value="F:structural constituent of ribosome"/>
    <property type="evidence" value="ECO:0007669"/>
    <property type="project" value="InterPro"/>
</dbReference>
<dbReference type="GO" id="GO:0000049">
    <property type="term" value="F:tRNA binding"/>
    <property type="evidence" value="ECO:0007669"/>
    <property type="project" value="UniProtKB-UniRule"/>
</dbReference>
<dbReference type="GO" id="GO:0006412">
    <property type="term" value="P:translation"/>
    <property type="evidence" value="ECO:0007669"/>
    <property type="project" value="UniProtKB-UniRule"/>
</dbReference>
<dbReference type="CDD" id="cd03368">
    <property type="entry name" value="Ribosomal_S12"/>
    <property type="match status" value="1"/>
</dbReference>
<dbReference type="FunFam" id="2.40.50.140:FF:000001">
    <property type="entry name" value="30S ribosomal protein S12"/>
    <property type="match status" value="1"/>
</dbReference>
<dbReference type="Gene3D" id="2.40.50.140">
    <property type="entry name" value="Nucleic acid-binding proteins"/>
    <property type="match status" value="1"/>
</dbReference>
<dbReference type="HAMAP" id="MF_00403_B">
    <property type="entry name" value="Ribosomal_uS12_B"/>
    <property type="match status" value="1"/>
</dbReference>
<dbReference type="InterPro" id="IPR012340">
    <property type="entry name" value="NA-bd_OB-fold"/>
</dbReference>
<dbReference type="InterPro" id="IPR006032">
    <property type="entry name" value="Ribosomal_uS12"/>
</dbReference>
<dbReference type="InterPro" id="IPR005679">
    <property type="entry name" value="Ribosomal_uS12_bac"/>
</dbReference>
<dbReference type="NCBIfam" id="TIGR00981">
    <property type="entry name" value="rpsL_bact"/>
    <property type="match status" value="1"/>
</dbReference>
<dbReference type="PANTHER" id="PTHR11652">
    <property type="entry name" value="30S RIBOSOMAL PROTEIN S12 FAMILY MEMBER"/>
    <property type="match status" value="1"/>
</dbReference>
<dbReference type="Pfam" id="PF00164">
    <property type="entry name" value="Ribosom_S12_S23"/>
    <property type="match status" value="1"/>
</dbReference>
<dbReference type="PIRSF" id="PIRSF002133">
    <property type="entry name" value="Ribosomal_S12/S23"/>
    <property type="match status" value="1"/>
</dbReference>
<dbReference type="PRINTS" id="PR01034">
    <property type="entry name" value="RIBOSOMALS12"/>
</dbReference>
<dbReference type="SUPFAM" id="SSF50249">
    <property type="entry name" value="Nucleic acid-binding proteins"/>
    <property type="match status" value="1"/>
</dbReference>
<dbReference type="PROSITE" id="PS00055">
    <property type="entry name" value="RIBOSOMAL_S12"/>
    <property type="match status" value="1"/>
</dbReference>
<feature type="chain" id="PRO_0000146213" description="Small ribosomal subunit protein uS12">
    <location>
        <begin position="1"/>
        <end position="122"/>
    </location>
</feature>
<proteinExistence type="inferred from homology"/>
<sequence length="122" mass="13458">MPTIQQLVRKGRHDKTAKVATAALKGSPQRRGVCTRVYTTTPKKPNSALRKVARVRLTSGIEVSAYIPGEGHNLQEHSMVLVRGGRVKDLPGVRYKIIRGALDTQGVKDRKQARSRYGAKRG</sequence>
<protein>
    <recommendedName>
        <fullName evidence="1">Small ribosomal subunit protein uS12</fullName>
    </recommendedName>
    <alternativeName>
        <fullName evidence="2">30S ribosomal protein S12</fullName>
    </alternativeName>
</protein>